<gene>
    <name type="primary">mauA</name>
    <name type="synonym">madB</name>
</gene>
<comment type="function">
    <text>Methylamine dehydrogenase carries out the oxidation of methylamine. Electrons are passed from methylamine dehydrogenase to amicyanin.</text>
</comment>
<comment type="catalytic activity">
    <reaction>
        <text>2 oxidized [amicyanin] + methylamine + H2O = 2 reduced [amicyanin] + formaldehyde + NH4(+) + 2 H(+)</text>
        <dbReference type="Rhea" id="RHEA:30207"/>
        <dbReference type="Rhea" id="RHEA-COMP:11100"/>
        <dbReference type="Rhea" id="RHEA-COMP:11101"/>
        <dbReference type="ChEBI" id="CHEBI:15377"/>
        <dbReference type="ChEBI" id="CHEBI:15378"/>
        <dbReference type="ChEBI" id="CHEBI:16842"/>
        <dbReference type="ChEBI" id="CHEBI:28938"/>
        <dbReference type="ChEBI" id="CHEBI:29036"/>
        <dbReference type="ChEBI" id="CHEBI:49552"/>
        <dbReference type="ChEBI" id="CHEBI:59338"/>
        <dbReference type="EC" id="1.4.9.1"/>
    </reaction>
</comment>
<comment type="cofactor">
    <cofactor>
        <name>tryptophan tryptophylquinone residue</name>
        <dbReference type="ChEBI" id="CHEBI:20251"/>
    </cofactor>
    <text>Uses a protein-derived tryptophan tryptophylquinone (TTQ) cofactor.</text>
</comment>
<comment type="pathway">
    <text>One-carbon metabolism; methylamine degradation; formaldehyde from methylamine: step 1/1.</text>
</comment>
<comment type="subunit">
    <text>Heterotetramer of two light and two heavy chains.</text>
</comment>
<comment type="subcellular location">
    <subcellularLocation>
        <location>Periplasm</location>
    </subcellularLocation>
</comment>
<comment type="PTM">
    <text>Predicted to be exported by the Tat system. The position of the signal peptide cleavage has been experimentally proven.</text>
</comment>
<comment type="PTM">
    <text>Tryptophan tryptophylquinone (TTQ) is formed by oxidation of the indole ring of a tryptophan to form tryptophylquinone followed by covalent cross-linking with another tryptophan residue.</text>
</comment>
<comment type="similarity">
    <text evidence="3">Belongs to the aromatic amine dehydrogenase light chain family.</text>
</comment>
<protein>
    <recommendedName>
        <fullName>Methylamine dehydrogenase light chain</fullName>
        <shortName>MADH</shortName>
        <ecNumber>1.4.9.1</ecNumber>
    </recommendedName>
    <alternativeName>
        <fullName>Methylamine dehydrogenase (amicyanin)</fullName>
    </alternativeName>
    <alternativeName>
        <fullName>Methylamine dehydrogenase subunit beta</fullName>
    </alternativeName>
</protein>
<keyword id="KW-0002">3D-structure</keyword>
<keyword id="KW-0903">Direct protein sequencing</keyword>
<keyword id="KW-1015">Disulfide bond</keyword>
<keyword id="KW-0249">Electron transport</keyword>
<keyword id="KW-0560">Oxidoreductase</keyword>
<keyword id="KW-0574">Periplasm</keyword>
<keyword id="KW-0732">Signal</keyword>
<keyword id="KW-0813">Transport</keyword>
<keyword id="KW-0824">TTQ</keyword>
<name>DHML_PARVE</name>
<dbReference type="EC" id="1.4.9.1"/>
<dbReference type="EMBL" id="M58001">
    <property type="protein sequence ID" value="AAA50570.1"/>
    <property type="molecule type" value="Genomic_DNA"/>
</dbReference>
<dbReference type="PIR" id="S19731">
    <property type="entry name" value="S19731"/>
</dbReference>
<dbReference type="RefSeq" id="WP_036750427.1">
    <property type="nucleotide sequence ID" value="NZ_QUMX01000042.1"/>
</dbReference>
<dbReference type="PDB" id="1MAE">
    <property type="method" value="X-ray"/>
    <property type="resolution" value="2.80 A"/>
    <property type="chains" value="L=64-187"/>
</dbReference>
<dbReference type="PDB" id="1MAF">
    <property type="method" value="X-ray"/>
    <property type="resolution" value="2.60 A"/>
    <property type="chains" value="L=64-187"/>
</dbReference>
<dbReference type="PDB" id="2MAD">
    <property type="method" value="X-ray"/>
    <property type="resolution" value="2.25 A"/>
    <property type="chains" value="L=64-187"/>
</dbReference>
<dbReference type="PDB" id="3C75">
    <property type="method" value="X-ray"/>
    <property type="resolution" value="2.50 A"/>
    <property type="chains" value="L/M=1-188"/>
</dbReference>
<dbReference type="PDBsum" id="1MAE"/>
<dbReference type="PDBsum" id="1MAF"/>
<dbReference type="PDBsum" id="2MAD"/>
<dbReference type="PDBsum" id="3C75"/>
<dbReference type="SMR" id="P22641"/>
<dbReference type="eggNOG" id="ENOG502ZHBX">
    <property type="taxonomic scope" value="Bacteria"/>
</dbReference>
<dbReference type="OrthoDB" id="7628766at2"/>
<dbReference type="BioCyc" id="MetaCyc:MONOMER-3902"/>
<dbReference type="UniPathway" id="UPA00895">
    <property type="reaction ID" value="UER00870"/>
</dbReference>
<dbReference type="EvolutionaryTrace" id="P22641"/>
<dbReference type="GO" id="GO:0030288">
    <property type="term" value="C:outer membrane-bounded periplasmic space"/>
    <property type="evidence" value="ECO:0007669"/>
    <property type="project" value="InterPro"/>
</dbReference>
<dbReference type="GO" id="GO:0030058">
    <property type="term" value="F:aliphatic amine dehydrogenase activity"/>
    <property type="evidence" value="ECO:0007669"/>
    <property type="project" value="InterPro"/>
</dbReference>
<dbReference type="GO" id="GO:0052876">
    <property type="term" value="F:methylamine dehydrogenase (amicyanin) activity"/>
    <property type="evidence" value="ECO:0007669"/>
    <property type="project" value="UniProtKB-EC"/>
</dbReference>
<dbReference type="GO" id="GO:0009308">
    <property type="term" value="P:amine metabolic process"/>
    <property type="evidence" value="ECO:0007669"/>
    <property type="project" value="InterPro"/>
</dbReference>
<dbReference type="Gene3D" id="2.60.30.10">
    <property type="entry name" value="Methylamine/Aralkylamine dehydrogenase light chain"/>
    <property type="match status" value="1"/>
</dbReference>
<dbReference type="InterPro" id="IPR016008">
    <property type="entry name" value="Amine_DH_Ltc"/>
</dbReference>
<dbReference type="InterPro" id="IPR036560">
    <property type="entry name" value="MADH/AADH_L_sf"/>
</dbReference>
<dbReference type="InterPro" id="IPR013504">
    <property type="entry name" value="MADH/AADH_Ltc_C_dom"/>
</dbReference>
<dbReference type="InterPro" id="IPR004229">
    <property type="entry name" value="MeN_DH_Ltc"/>
</dbReference>
<dbReference type="NCBIfam" id="TIGR02659">
    <property type="entry name" value="TTQ_MADH_Lt"/>
    <property type="match status" value="1"/>
</dbReference>
<dbReference type="Pfam" id="PF02975">
    <property type="entry name" value="Me-amine-dh_L"/>
    <property type="match status" value="1"/>
</dbReference>
<dbReference type="PIRSF" id="PIRSF000192">
    <property type="entry name" value="Amine_dh_beta"/>
    <property type="match status" value="1"/>
</dbReference>
<dbReference type="SUPFAM" id="SSF57561">
    <property type="entry name" value="Methylamine dehydrogenase, L chain"/>
    <property type="match status" value="1"/>
</dbReference>
<proteinExistence type="evidence at protein level"/>
<accession>P22641</accession>
<accession>Q56458</accession>
<evidence type="ECO:0000269" key="1">
    <source>
    </source>
</evidence>
<evidence type="ECO:0000269" key="2">
    <source>
    </source>
</evidence>
<evidence type="ECO:0000305" key="3"/>
<evidence type="ECO:0007829" key="4">
    <source>
        <dbReference type="PDB" id="2MAD"/>
    </source>
</evidence>
<organism>
    <name type="scientific">Paracoccus versutus</name>
    <name type="common">Thiobacillus versutus</name>
    <dbReference type="NCBI Taxonomy" id="34007"/>
    <lineage>
        <taxon>Bacteria</taxon>
        <taxon>Pseudomonadati</taxon>
        <taxon>Pseudomonadota</taxon>
        <taxon>Alphaproteobacteria</taxon>
        <taxon>Rhodobacterales</taxon>
        <taxon>Paracoccaceae</taxon>
        <taxon>Paracoccus</taxon>
    </lineage>
</organism>
<reference key="1">
    <citation type="journal article" date="1991" name="Eur. J. Biochem.">
        <title>Cloning, sequencing and expression studies of the genes encoding amicyanin and the beta-subunit of methylamine dehydrogenase from Thiobacillus versutus.</title>
        <authorList>
            <person name="Ubbink M."/>
            <person name="van Kleef M.A."/>
            <person name="Kleinjan D.J."/>
            <person name="Hoitink C.W."/>
            <person name="Huitema F."/>
            <person name="Beintema J.J."/>
            <person name="Duine J.A."/>
            <person name="Canters G.W."/>
        </authorList>
    </citation>
    <scope>NUCLEOTIDE SEQUENCE [GENOMIC DNA]</scope>
</reference>
<reference key="2">
    <citation type="journal article" date="1989" name="EMBO J.">
        <title>Structure of quinoprotein methylamine dehydrogenase at 2.25-A resolution.</title>
        <authorList>
            <person name="Vellieux F.M.D."/>
            <person name="Huitema F."/>
            <person name="Groendijk H."/>
            <person name="Kalk K.H."/>
            <person name="Jzn J.F."/>
            <person name="Jongejan J.A."/>
            <person name="Duine J.A."/>
            <person name="Petratos K."/>
            <person name="Drenth J."/>
            <person name="Hol W.G.J."/>
        </authorList>
    </citation>
    <scope>PROTEIN SEQUENCE OF 58-188</scope>
    <scope>X-RAY CRYSTALLOGRAPHY (2.25 ANGSTROMS)</scope>
</reference>
<reference key="3">
    <citation type="journal article" date="1993" name="FEBS Lett.">
        <title>N-terminal heterogeneity of methylamine dehydrogenase from Thiobacillus versutus.</title>
        <authorList>
            <person name="Van Beeumen J."/>
            <person name="Van Driessche G."/>
            <person name="Huitema F."/>
            <person name="Duine J.A."/>
            <person name="Canters G.W."/>
        </authorList>
    </citation>
    <scope>PROTEIN SEQUENCE OF 58-66</scope>
</reference>
<reference key="4">
    <citation type="journal article" date="1990" name="Acta Crystallogr. B">
        <title>Structure determination of quinoprotein methylamine dehydrogenase from Thiobacillus versutus.</title>
        <authorList>
            <person name="Vellieux F.M.D."/>
            <person name="Kalk K.H."/>
            <person name="Hol W.G.J."/>
        </authorList>
    </citation>
    <scope>X-RAY CRYSTALLOGRAPHY (2.25 ANGSTROMS)</scope>
</reference>
<feature type="signal peptide" description="Tat-type signal" evidence="1 2">
    <location>
        <begin position="1"/>
        <end position="57"/>
    </location>
</feature>
<feature type="chain" id="PRO_0000025576" description="Methylamine dehydrogenase light chain">
    <location>
        <begin position="58"/>
        <end position="188"/>
    </location>
</feature>
<feature type="modified residue" description="Tryptophylquinone">
    <location>
        <position position="114"/>
    </location>
</feature>
<feature type="disulfide bond">
    <location>
        <begin position="80"/>
        <end position="145"/>
    </location>
</feature>
<feature type="disulfide bond">
    <location>
        <begin position="86"/>
        <end position="118"/>
    </location>
</feature>
<feature type="disulfide bond">
    <location>
        <begin position="93"/>
        <end position="178"/>
    </location>
</feature>
<feature type="disulfide bond">
    <location>
        <begin position="95"/>
        <end position="143"/>
    </location>
</feature>
<feature type="disulfide bond">
    <location>
        <begin position="103"/>
        <end position="134"/>
    </location>
</feature>
<feature type="disulfide bond">
    <location>
        <begin position="135"/>
        <end position="166"/>
    </location>
</feature>
<feature type="cross-link" description="Tryptophan tryptophylquinone (Trp-Trp)">
    <location>
        <begin position="114"/>
        <end position="165"/>
    </location>
</feature>
<feature type="sequence conflict" description="In Ref. 2; AA sequence." evidence="3" ref="2">
    <original>D</original>
    <variation>A</variation>
    <location>
        <position position="89"/>
    </location>
</feature>
<feature type="sequence conflict" description="In Ref. 2; AA sequence." evidence="3" ref="2">
    <original>G</original>
    <variation>A</variation>
    <location>
        <position position="97"/>
    </location>
</feature>
<feature type="sequence conflict" description="In Ref. 2; AA sequence." evidence="3" ref="2">
    <original>N</original>
    <variation>S</variation>
    <location>
        <position position="102"/>
    </location>
</feature>
<feature type="sequence conflict" description="In Ref. 2; AA sequence." evidence="3" ref="2">
    <original>KLATA</original>
    <variation>LVASG</variation>
    <location>
        <begin position="108"/>
        <end position="112"/>
    </location>
</feature>
<feature type="sequence conflict" description="In Ref. 2; AA sequence." evidence="3" ref="2">
    <original>A</original>
    <variation>G</variation>
    <location>
        <position position="116"/>
    </location>
</feature>
<feature type="sequence conflict" description="In Ref. 2; AA sequence." evidence="3" ref="2">
    <original>TDGQSYLI</original>
    <variation>PDPNKYIT</variation>
    <location>
        <begin position="122"/>
        <end position="129"/>
    </location>
</feature>
<feature type="sequence conflict" description="In Ref. 2; AA sequence." evidence="3" ref="2">
    <original>P</original>
    <variation>A</variation>
    <location>
        <position position="144"/>
    </location>
</feature>
<feature type="sequence conflict" description="In Ref. 2; AA sequence." evidence="3" ref="2">
    <original>RPEF</original>
    <variation>NKD</variation>
    <location>
        <begin position="156"/>
        <end position="159"/>
    </location>
</feature>
<feature type="sequence conflict" description="In Ref. 2; AA sequence." evidence="3" ref="2">
    <original>A</original>
    <variation>G</variation>
    <location>
        <position position="169"/>
    </location>
</feature>
<feature type="sequence conflict" description="In Ref. 2; AA sequence." evidence="3" ref="2">
    <original>DA</original>
    <variation>G</variation>
    <location>
        <begin position="172"/>
        <end position="173"/>
    </location>
</feature>
<feature type="sequence conflict" description="In Ref. 2; AA sequence." evidence="3" ref="2">
    <original>T</original>
    <variation>S</variation>
    <location>
        <position position="179"/>
    </location>
</feature>
<feature type="sequence conflict" description="In Ref. 2; AA sequence." evidence="3" ref="2">
    <original>IVGKAS</original>
    <variation>VSGA</variation>
    <location>
        <begin position="183"/>
        <end position="188"/>
    </location>
</feature>
<feature type="strand" evidence="4">
    <location>
        <begin position="73"/>
        <end position="75"/>
    </location>
</feature>
<feature type="helix" evidence="4">
    <location>
        <begin position="83"/>
        <end position="85"/>
    </location>
</feature>
<feature type="strand" evidence="4">
    <location>
        <begin position="89"/>
        <end position="92"/>
    </location>
</feature>
<feature type="helix" evidence="4">
    <location>
        <begin position="93"/>
        <end position="95"/>
    </location>
</feature>
<feature type="strand" evidence="4">
    <location>
        <begin position="100"/>
        <end position="102"/>
    </location>
</feature>
<feature type="strand" evidence="4">
    <location>
        <begin position="114"/>
        <end position="120"/>
    </location>
</feature>
<feature type="turn" evidence="4">
    <location>
        <begin position="121"/>
        <end position="124"/>
    </location>
</feature>
<feature type="strand" evidence="4">
    <location>
        <begin position="125"/>
        <end position="131"/>
    </location>
</feature>
<feature type="strand" evidence="4">
    <location>
        <begin position="133"/>
        <end position="137"/>
    </location>
</feature>
<feature type="strand" evidence="4">
    <location>
        <begin position="142"/>
        <end position="146"/>
    </location>
</feature>
<feature type="helix" evidence="4">
    <location>
        <begin position="157"/>
        <end position="159"/>
    </location>
</feature>
<feature type="strand" evidence="4">
    <location>
        <begin position="161"/>
        <end position="163"/>
    </location>
</feature>
<feature type="helix" evidence="4">
    <location>
        <begin position="170"/>
        <end position="172"/>
    </location>
</feature>
<feature type="strand" evidence="4">
    <location>
        <begin position="175"/>
        <end position="179"/>
    </location>
</feature>
<feature type="strand" evidence="4">
    <location>
        <begin position="183"/>
        <end position="186"/>
    </location>
</feature>
<sequence>MLGNFRFDDMVEKLSRRVAGRTSRRGAIGRLGTVLAGAALVPLLPVDRRGRVSRANAAGPAEGVDPRAKWQPQDNDIQACDYWRHCSIDGNICDCSGGSLTNCPPGTKLATASWVASCYNPTDGQSYLIAYRDCCGYNVSGRCPCLNTEGELPVYRPEFANDIIWCFGAEDDAMTYHCTISPIVGKAS</sequence>